<evidence type="ECO:0000250" key="1"/>
<evidence type="ECO:0000250" key="2">
    <source>
        <dbReference type="UniProtKB" id="Q80T22"/>
    </source>
</evidence>
<evidence type="ECO:0000255" key="3"/>
<evidence type="ECO:0000256" key="4">
    <source>
        <dbReference type="SAM" id="MobiDB-lite"/>
    </source>
</evidence>
<evidence type="ECO:0000305" key="5"/>
<name>MFS4B_XENLA</name>
<sequence length="491" mass="53397">MAIAVLGPTFLDLAENVESSVANISFIFVGRSMGYLGGSVLGGILFEQINQHLLLGISMLATAAGLFVVPWCKKAVLLTAVMSVVGMSMGFLDTGGNIIILNTWEDQAGPHIQALHFSFALGAFVAPILAKLALEFLPLDKKSFNVSEPFLEQSALPFGIKKSMLSYIVIGTYILLVSLFLFILFSKSRPRQSSGKASDDKFRTARYHNAVIFLLFLFFFCYVGAEVAYGSYIFTYAITYITNIENNYAAGLNSLFWGVFAAVRGLAICFATCLYPGTMLLLSVIGCTLSSLILVLFSRNHLLLWVGTAVYGASMATTFPSGFSWVQQYTTIGGKSASLFVVGAALGEMAIPASVGYLQGMFPNFPVLMYTALASSTMTAILFPVMYKLATAQQDQAQYNRVESDDRRALLSSSGMEEEDEDEAQNWNEADFETIEMNDQMKNSVTVISEDTPGNSAPSEILKHSTKSNGAEAAANKSPSRKHNTDREKND</sequence>
<organism>
    <name type="scientific">Xenopus laevis</name>
    <name type="common">African clawed frog</name>
    <dbReference type="NCBI Taxonomy" id="8355"/>
    <lineage>
        <taxon>Eukaryota</taxon>
        <taxon>Metazoa</taxon>
        <taxon>Chordata</taxon>
        <taxon>Craniata</taxon>
        <taxon>Vertebrata</taxon>
        <taxon>Euteleostomi</taxon>
        <taxon>Amphibia</taxon>
        <taxon>Batrachia</taxon>
        <taxon>Anura</taxon>
        <taxon>Pipoidea</taxon>
        <taxon>Pipidae</taxon>
        <taxon>Xenopodinae</taxon>
        <taxon>Xenopus</taxon>
        <taxon>Xenopus</taxon>
    </lineage>
</organism>
<reference key="1">
    <citation type="submission" date="2005-04" db="EMBL/GenBank/DDBJ databases">
        <authorList>
            <consortium name="NIH - Xenopus Gene Collection (XGC) project"/>
        </authorList>
    </citation>
    <scope>NUCLEOTIDE SEQUENCE [LARGE SCALE MRNA]</scope>
    <source>
        <tissue>Oocyte</tissue>
    </source>
</reference>
<comment type="function">
    <text evidence="2">May function as a sodium-dependent glucose transporter. Potential channels for urea in the inner medulla of kidney.</text>
</comment>
<comment type="subcellular location">
    <subcellularLocation>
        <location evidence="2">Apical cell membrane</location>
        <topology evidence="1">Multi-pass membrane protein</topology>
    </subcellularLocation>
</comment>
<comment type="similarity">
    <text evidence="5">Belongs to the major facilitator superfamily.</text>
</comment>
<dbReference type="EMBL" id="BC092312">
    <property type="protein sequence ID" value="AAH92312.1"/>
    <property type="molecule type" value="mRNA"/>
</dbReference>
<dbReference type="RefSeq" id="NP_001089348.1">
    <property type="nucleotide sequence ID" value="NM_001095879.1"/>
</dbReference>
<dbReference type="RefSeq" id="XP_018120053.1">
    <property type="nucleotide sequence ID" value="XM_018264564.1"/>
</dbReference>
<dbReference type="SMR" id="Q569T7"/>
<dbReference type="TCDB" id="2.A.1.7.23">
    <property type="family name" value="the major facilitator superfamily (mfs)"/>
</dbReference>
<dbReference type="DNASU" id="734398"/>
<dbReference type="GeneID" id="734398"/>
<dbReference type="KEGG" id="xla:734398"/>
<dbReference type="AGR" id="Xenbase:XB-GENE-5884015"/>
<dbReference type="CTD" id="734398"/>
<dbReference type="Xenbase" id="XB-GENE-5884015">
    <property type="gene designation" value="mfsd4b.S"/>
</dbReference>
<dbReference type="OrthoDB" id="546893at2759"/>
<dbReference type="Proteomes" id="UP000186698">
    <property type="component" value="Chromosome 5S"/>
</dbReference>
<dbReference type="Bgee" id="734398">
    <property type="expression patterns" value="Expressed in blastula and 19 other cell types or tissues"/>
</dbReference>
<dbReference type="GO" id="GO:0016324">
    <property type="term" value="C:apical plasma membrane"/>
    <property type="evidence" value="ECO:0007669"/>
    <property type="project" value="UniProtKB-SubCell"/>
</dbReference>
<dbReference type="GO" id="GO:0015293">
    <property type="term" value="F:symporter activity"/>
    <property type="evidence" value="ECO:0007669"/>
    <property type="project" value="UniProtKB-KW"/>
</dbReference>
<dbReference type="GO" id="GO:0006814">
    <property type="term" value="P:sodium ion transport"/>
    <property type="evidence" value="ECO:0007669"/>
    <property type="project" value="UniProtKB-KW"/>
</dbReference>
<dbReference type="CDD" id="cd17454">
    <property type="entry name" value="MFS_NaGLT1_MFSD4B"/>
    <property type="match status" value="1"/>
</dbReference>
<dbReference type="FunFam" id="1.20.1250.20:FF:000448">
    <property type="entry name" value="Major facilitator superfamily domain containing 4B"/>
    <property type="match status" value="1"/>
</dbReference>
<dbReference type="FunFam" id="1.20.1250.20:FF:000508">
    <property type="entry name" value="Sodium-dependent glucose transporter 1"/>
    <property type="match status" value="1"/>
</dbReference>
<dbReference type="Gene3D" id="1.20.1250.20">
    <property type="entry name" value="MFS general substrate transporter like domains"/>
    <property type="match status" value="2"/>
</dbReference>
<dbReference type="InterPro" id="IPR011701">
    <property type="entry name" value="MFS"/>
</dbReference>
<dbReference type="InterPro" id="IPR036259">
    <property type="entry name" value="MFS_trans_sf"/>
</dbReference>
<dbReference type="PANTHER" id="PTHR23121">
    <property type="entry name" value="SODIUM-DEPENDENT GLUCOSE TRANSPORTER 1"/>
    <property type="match status" value="1"/>
</dbReference>
<dbReference type="PANTHER" id="PTHR23121:SF9">
    <property type="entry name" value="SODIUM-DEPENDENT GLUCOSE TRANSPORTER 1"/>
    <property type="match status" value="1"/>
</dbReference>
<dbReference type="Pfam" id="PF07690">
    <property type="entry name" value="MFS_1"/>
    <property type="match status" value="1"/>
</dbReference>
<dbReference type="SUPFAM" id="SSF103473">
    <property type="entry name" value="MFS general substrate transporter"/>
    <property type="match status" value="1"/>
</dbReference>
<accession>Q569T7</accession>
<protein>
    <recommendedName>
        <fullName evidence="2">Sodium-dependent glucose transporter 1</fullName>
    </recommendedName>
    <alternativeName>
        <fullName>Major facilitator superfamily domain-containing protein 4B</fullName>
    </alternativeName>
</protein>
<proteinExistence type="evidence at transcript level"/>
<feature type="chain" id="PRO_0000294516" description="Sodium-dependent glucose transporter 1">
    <location>
        <begin position="1"/>
        <end position="491"/>
    </location>
</feature>
<feature type="transmembrane region" description="Helical" evidence="3">
    <location>
        <begin position="26"/>
        <end position="46"/>
    </location>
</feature>
<feature type="transmembrane region" description="Helical" evidence="3">
    <location>
        <begin position="52"/>
        <end position="72"/>
    </location>
</feature>
<feature type="transmembrane region" description="Helical" evidence="3">
    <location>
        <begin position="81"/>
        <end position="101"/>
    </location>
</feature>
<feature type="transmembrane region" description="Helical" evidence="3">
    <location>
        <begin position="119"/>
        <end position="139"/>
    </location>
</feature>
<feature type="transmembrane region" description="Helical" evidence="3">
    <location>
        <begin position="165"/>
        <end position="185"/>
    </location>
</feature>
<feature type="transmembrane region" description="Helical" evidence="3">
    <location>
        <begin position="210"/>
        <end position="230"/>
    </location>
</feature>
<feature type="transmembrane region" description="Helical" evidence="3">
    <location>
        <begin position="255"/>
        <end position="275"/>
    </location>
</feature>
<feature type="transmembrane region" description="Helical" evidence="3">
    <location>
        <begin position="277"/>
        <end position="297"/>
    </location>
</feature>
<feature type="transmembrane region" description="Helical" evidence="3">
    <location>
        <begin position="303"/>
        <end position="323"/>
    </location>
</feature>
<feature type="transmembrane region" description="Helical" evidence="3">
    <location>
        <begin position="338"/>
        <end position="358"/>
    </location>
</feature>
<feature type="transmembrane region" description="Helical" evidence="3">
    <location>
        <begin position="365"/>
        <end position="385"/>
    </location>
</feature>
<feature type="region of interest" description="Disordered" evidence="4">
    <location>
        <begin position="397"/>
        <end position="425"/>
    </location>
</feature>
<feature type="region of interest" description="Disordered" evidence="4">
    <location>
        <begin position="438"/>
        <end position="491"/>
    </location>
</feature>
<feature type="compositionally biased region" description="Acidic residues" evidence="4">
    <location>
        <begin position="416"/>
        <end position="425"/>
    </location>
</feature>
<feature type="compositionally biased region" description="Polar residues" evidence="4">
    <location>
        <begin position="440"/>
        <end position="458"/>
    </location>
</feature>
<keyword id="KW-1003">Cell membrane</keyword>
<keyword id="KW-0406">Ion transport</keyword>
<keyword id="KW-0472">Membrane</keyword>
<keyword id="KW-1185">Reference proteome</keyword>
<keyword id="KW-0915">Sodium</keyword>
<keyword id="KW-0739">Sodium transport</keyword>
<keyword id="KW-0762">Sugar transport</keyword>
<keyword id="KW-0769">Symport</keyword>
<keyword id="KW-0812">Transmembrane</keyword>
<keyword id="KW-1133">Transmembrane helix</keyword>
<keyword id="KW-0813">Transport</keyword>
<gene>
    <name type="primary">mfsd4b</name>
    <name type="synonym">naglt1</name>
</gene>